<name>Y1181_ARATH</name>
<protein>
    <recommendedName>
        <fullName>Uncharacterized aarF domain-containing protein kinase At1g71810, chloroplastic</fullName>
        <ecNumber>2.7.-.-</ecNumber>
    </recommendedName>
</protein>
<organism>
    <name type="scientific">Arabidopsis thaliana</name>
    <name type="common">Mouse-ear cress</name>
    <dbReference type="NCBI Taxonomy" id="3702"/>
    <lineage>
        <taxon>Eukaryota</taxon>
        <taxon>Viridiplantae</taxon>
        <taxon>Streptophyta</taxon>
        <taxon>Embryophyta</taxon>
        <taxon>Tracheophyta</taxon>
        <taxon>Spermatophyta</taxon>
        <taxon>Magnoliopsida</taxon>
        <taxon>eudicotyledons</taxon>
        <taxon>Gunneridae</taxon>
        <taxon>Pentapetalae</taxon>
        <taxon>rosids</taxon>
        <taxon>malvids</taxon>
        <taxon>Brassicales</taxon>
        <taxon>Brassicaceae</taxon>
        <taxon>Camelineae</taxon>
        <taxon>Arabidopsis</taxon>
    </lineage>
</organism>
<sequence length="692" mass="77462">MLRLPSSMPIVSFPANPNLLINPQPSWPSRRGNSAVVVSAASRDVDSFTSKSGYLFSLSADEADSLSEYNFPRIDGMYKKKPLILLRRLAQIGTTFSYWFGLRLADEALERSDQMFKVRAAELRKLLVELGPAYVKIAQAVSSRPDLIPPIYLDELSLLQDQITPFSTEVAFNMIEDELGLPIDELFSEISPEPVAAASLGQVYQARLRRSGKVVAVKVQRPGVRAAIALDTLILRYIAGLIKKAGRFNSDLEAVVDEWATSLFKEMDYLNEAQNGIKFRKLYGGIKDVLVPKMYTEYSTSKVLVMEWVEGQKLNEVNDLYLVEVGVYCSFNQLLEYGFYHADPHPGNFLRTYDGQLAYLDFGMMGDFRPELRDGFMEACLHLVNRDFKALAKDFVTLGLLPPTAEKSAVTKALTDVFQDAISRGVRNISFGDLLGDLGKTMYRFKFRIPPYFSLVIRSLAVLEGIAIGISPNYKVLGSTYPWIARKILTDSSPQLKSSLQNLLYEEGVFRIDRLESLLSESLRTETALVQKPVVGTESNIAMKQMLAFTFTEQGSFVREILLREFAKGLDAYGLATLDSFTFSGSGPSSSLTEEDMTNLRTFYRLISLFSGMQKAKSQVKAVSKYGEALTPLDEASLVMYQLPSAQEMLPILSILPELPQESQQRLLQLPGDLVGRLVTRAFARTIRRIFL</sequence>
<gene>
    <name type="ordered locus">At1g71810</name>
    <name type="ORF">F14O23.19</name>
    <name type="ORF">F14O23_17</name>
</gene>
<evidence type="ECO:0000255" key="1"/>
<evidence type="ECO:0000255" key="2">
    <source>
        <dbReference type="PROSITE-ProRule" id="PRU00159"/>
    </source>
</evidence>
<evidence type="ECO:0000269" key="3">
    <source>
    </source>
</evidence>
<evidence type="ECO:0000269" key="4">
    <source>
    </source>
</evidence>
<evidence type="ECO:0000303" key="5">
    <source>
    </source>
</evidence>
<evidence type="ECO:0000305" key="6"/>
<proteinExistence type="evidence at protein level"/>
<dbReference type="EC" id="2.7.-.-"/>
<dbReference type="EMBL" id="AC012654">
    <property type="protein sequence ID" value="AAF43234.1"/>
    <property type="status" value="ALT_SEQ"/>
    <property type="molecule type" value="Genomic_DNA"/>
</dbReference>
<dbReference type="EMBL" id="CP002684">
    <property type="protein sequence ID" value="AEE35235.1"/>
    <property type="molecule type" value="Genomic_DNA"/>
</dbReference>
<dbReference type="EMBL" id="AY039896">
    <property type="protein sequence ID" value="AAK64000.1"/>
    <property type="molecule type" value="mRNA"/>
</dbReference>
<dbReference type="EMBL" id="AY094006">
    <property type="protein sequence ID" value="AAM16267.1"/>
    <property type="molecule type" value="mRNA"/>
</dbReference>
<dbReference type="EMBL" id="AY081264">
    <property type="protein sequence ID" value="AAL91153.1"/>
    <property type="molecule type" value="mRNA"/>
</dbReference>
<dbReference type="PIR" id="F96740">
    <property type="entry name" value="F96740"/>
</dbReference>
<dbReference type="RefSeq" id="NP_565025.1">
    <molecule id="Q94BU1-1"/>
    <property type="nucleotide sequence ID" value="NM_105839.3"/>
</dbReference>
<dbReference type="SMR" id="Q94BU1"/>
<dbReference type="FunCoup" id="Q94BU1">
    <property type="interactions" value="413"/>
</dbReference>
<dbReference type="STRING" id="3702.Q94BU1"/>
<dbReference type="PaxDb" id="3702-AT1G71810.1"/>
<dbReference type="ProteomicsDB" id="242461">
    <molecule id="Q94BU1-1"/>
</dbReference>
<dbReference type="EnsemblPlants" id="AT1G71810.1">
    <molecule id="Q94BU1-1"/>
    <property type="protein sequence ID" value="AT1G71810.1"/>
    <property type="gene ID" value="AT1G71810"/>
</dbReference>
<dbReference type="GeneID" id="843511"/>
<dbReference type="Gramene" id="AT1G71810.1">
    <molecule id="Q94BU1-1"/>
    <property type="protein sequence ID" value="AT1G71810.1"/>
    <property type="gene ID" value="AT1G71810"/>
</dbReference>
<dbReference type="KEGG" id="ath:AT1G71810"/>
<dbReference type="Araport" id="AT1G71810"/>
<dbReference type="TAIR" id="AT1G71810"/>
<dbReference type="eggNOG" id="KOG1235">
    <property type="taxonomic scope" value="Eukaryota"/>
</dbReference>
<dbReference type="HOGENOM" id="CLU_006533_4_3_1"/>
<dbReference type="InParanoid" id="Q94BU1"/>
<dbReference type="OMA" id="AFNMIED"/>
<dbReference type="PhylomeDB" id="Q94BU1"/>
<dbReference type="PRO" id="PR:Q94BU1"/>
<dbReference type="Proteomes" id="UP000006548">
    <property type="component" value="Chromosome 1"/>
</dbReference>
<dbReference type="ExpressionAtlas" id="Q94BU1">
    <property type="expression patterns" value="baseline and differential"/>
</dbReference>
<dbReference type="GO" id="GO:0009507">
    <property type="term" value="C:chloroplast"/>
    <property type="evidence" value="ECO:0007005"/>
    <property type="project" value="TAIR"/>
</dbReference>
<dbReference type="GO" id="GO:0010287">
    <property type="term" value="C:plastoglobule"/>
    <property type="evidence" value="ECO:0007005"/>
    <property type="project" value="TAIR"/>
</dbReference>
<dbReference type="GO" id="GO:0005524">
    <property type="term" value="F:ATP binding"/>
    <property type="evidence" value="ECO:0007669"/>
    <property type="project" value="UniProtKB-KW"/>
</dbReference>
<dbReference type="GO" id="GO:0004672">
    <property type="term" value="F:protein kinase activity"/>
    <property type="evidence" value="ECO:0007669"/>
    <property type="project" value="InterPro"/>
</dbReference>
<dbReference type="CDD" id="cd05121">
    <property type="entry name" value="ABC1_ADCK3-like"/>
    <property type="match status" value="1"/>
</dbReference>
<dbReference type="Gene3D" id="1.10.510.10">
    <property type="entry name" value="Transferase(Phosphotransferase) domain 1"/>
    <property type="match status" value="1"/>
</dbReference>
<dbReference type="InterPro" id="IPR004147">
    <property type="entry name" value="ABC1_dom"/>
</dbReference>
<dbReference type="InterPro" id="IPR011009">
    <property type="entry name" value="Kinase-like_dom_sf"/>
</dbReference>
<dbReference type="InterPro" id="IPR000719">
    <property type="entry name" value="Prot_kinase_dom"/>
</dbReference>
<dbReference type="InterPro" id="IPR050154">
    <property type="entry name" value="UbiB_kinase"/>
</dbReference>
<dbReference type="PANTHER" id="PTHR10566">
    <property type="entry name" value="CHAPERONE-ACTIVITY OF BC1 COMPLEX CABC1 -RELATED"/>
    <property type="match status" value="1"/>
</dbReference>
<dbReference type="PANTHER" id="PTHR10566:SF119">
    <property type="entry name" value="OS04G0640500 PROTEIN"/>
    <property type="match status" value="1"/>
</dbReference>
<dbReference type="Pfam" id="PF03109">
    <property type="entry name" value="ABC1"/>
    <property type="match status" value="1"/>
</dbReference>
<dbReference type="SUPFAM" id="SSF56112">
    <property type="entry name" value="Protein kinase-like (PK-like)"/>
    <property type="match status" value="1"/>
</dbReference>
<dbReference type="PROSITE" id="PS50011">
    <property type="entry name" value="PROTEIN_KINASE_DOM"/>
    <property type="match status" value="1"/>
</dbReference>
<accession>Q94BU1</accession>
<accession>Q8RXG7</accession>
<accession>Q9M9G5</accession>
<feature type="transit peptide" description="Chloroplast" evidence="1">
    <location>
        <begin position="1"/>
        <end position="39"/>
    </location>
</feature>
<feature type="chain" id="PRO_0000286523" description="Uncharacterized aarF domain-containing protein kinase At1g71810, chloroplastic">
    <location>
        <begin position="40"/>
        <end position="692"/>
    </location>
</feature>
<feature type="domain" description="Protein kinase" evidence="2">
    <location>
        <begin position="189"/>
        <end position="523"/>
    </location>
</feature>
<feature type="active site" description="Proton acceptor" evidence="2">
    <location>
        <position position="343"/>
    </location>
</feature>
<feature type="binding site" evidence="2">
    <location>
        <begin position="195"/>
        <end position="203"/>
    </location>
    <ligand>
        <name>ATP</name>
        <dbReference type="ChEBI" id="CHEBI:30616"/>
    </ligand>
</feature>
<feature type="binding site" evidence="2">
    <location>
        <position position="218"/>
    </location>
    <ligand>
        <name>ATP</name>
        <dbReference type="ChEBI" id="CHEBI:30616"/>
    </ligand>
</feature>
<feature type="splice variant" id="VSP_025068" description="In isoform 2." evidence="5">
    <location>
        <begin position="1"/>
        <end position="263"/>
    </location>
</feature>
<feature type="splice variant" id="VSP_025069" description="In isoform 2." evidence="5">
    <original>FK</original>
    <variation>MQ</variation>
    <location>
        <begin position="264"/>
        <end position="265"/>
    </location>
</feature>
<feature type="splice variant" id="VSP_025070" description="In isoform 2." evidence="5">
    <location>
        <begin position="506"/>
        <end position="520"/>
    </location>
</feature>
<feature type="splice variant" id="VSP_025071" description="In isoform 2." evidence="5">
    <original>S</original>
    <variation>SVST</variation>
    <location>
        <position position="618"/>
    </location>
</feature>
<reference key="1">
    <citation type="journal article" date="2000" name="Nature">
        <title>Sequence and analysis of chromosome 1 of the plant Arabidopsis thaliana.</title>
        <authorList>
            <person name="Theologis A."/>
            <person name="Ecker J.R."/>
            <person name="Palm C.J."/>
            <person name="Federspiel N.A."/>
            <person name="Kaul S."/>
            <person name="White O."/>
            <person name="Alonso J."/>
            <person name="Altafi H."/>
            <person name="Araujo R."/>
            <person name="Bowman C.L."/>
            <person name="Brooks S.Y."/>
            <person name="Buehler E."/>
            <person name="Chan A."/>
            <person name="Chao Q."/>
            <person name="Chen H."/>
            <person name="Cheuk R.F."/>
            <person name="Chin C.W."/>
            <person name="Chung M.K."/>
            <person name="Conn L."/>
            <person name="Conway A.B."/>
            <person name="Conway A.R."/>
            <person name="Creasy T.H."/>
            <person name="Dewar K."/>
            <person name="Dunn P."/>
            <person name="Etgu P."/>
            <person name="Feldblyum T.V."/>
            <person name="Feng J.-D."/>
            <person name="Fong B."/>
            <person name="Fujii C.Y."/>
            <person name="Gill J.E."/>
            <person name="Goldsmith A.D."/>
            <person name="Haas B."/>
            <person name="Hansen N.F."/>
            <person name="Hughes B."/>
            <person name="Huizar L."/>
            <person name="Hunter J.L."/>
            <person name="Jenkins J."/>
            <person name="Johnson-Hopson C."/>
            <person name="Khan S."/>
            <person name="Khaykin E."/>
            <person name="Kim C.J."/>
            <person name="Koo H.L."/>
            <person name="Kremenetskaia I."/>
            <person name="Kurtz D.B."/>
            <person name="Kwan A."/>
            <person name="Lam B."/>
            <person name="Langin-Hooper S."/>
            <person name="Lee A."/>
            <person name="Lee J.M."/>
            <person name="Lenz C.A."/>
            <person name="Li J.H."/>
            <person name="Li Y.-P."/>
            <person name="Lin X."/>
            <person name="Liu S.X."/>
            <person name="Liu Z.A."/>
            <person name="Luros J.S."/>
            <person name="Maiti R."/>
            <person name="Marziali A."/>
            <person name="Militscher J."/>
            <person name="Miranda M."/>
            <person name="Nguyen M."/>
            <person name="Nierman W.C."/>
            <person name="Osborne B.I."/>
            <person name="Pai G."/>
            <person name="Peterson J."/>
            <person name="Pham P.K."/>
            <person name="Rizzo M."/>
            <person name="Rooney T."/>
            <person name="Rowley D."/>
            <person name="Sakano H."/>
            <person name="Salzberg S.L."/>
            <person name="Schwartz J.R."/>
            <person name="Shinn P."/>
            <person name="Southwick A.M."/>
            <person name="Sun H."/>
            <person name="Tallon L.J."/>
            <person name="Tambunga G."/>
            <person name="Toriumi M.J."/>
            <person name="Town C.D."/>
            <person name="Utterback T."/>
            <person name="Van Aken S."/>
            <person name="Vaysberg M."/>
            <person name="Vysotskaia V.S."/>
            <person name="Walker M."/>
            <person name="Wu D."/>
            <person name="Yu G."/>
            <person name="Fraser C.M."/>
            <person name="Venter J.C."/>
            <person name="Davis R.W."/>
        </authorList>
    </citation>
    <scope>NUCLEOTIDE SEQUENCE [LARGE SCALE GENOMIC DNA]</scope>
    <source>
        <strain>cv. Columbia</strain>
    </source>
</reference>
<reference key="2">
    <citation type="journal article" date="2017" name="Plant J.">
        <title>Araport11: a complete reannotation of the Arabidopsis thaliana reference genome.</title>
        <authorList>
            <person name="Cheng C.Y."/>
            <person name="Krishnakumar V."/>
            <person name="Chan A.P."/>
            <person name="Thibaud-Nissen F."/>
            <person name="Schobel S."/>
            <person name="Town C.D."/>
        </authorList>
    </citation>
    <scope>GENOME REANNOTATION</scope>
    <source>
        <strain>cv. Columbia</strain>
    </source>
</reference>
<reference key="3">
    <citation type="journal article" date="2003" name="Science">
        <title>Empirical analysis of transcriptional activity in the Arabidopsis genome.</title>
        <authorList>
            <person name="Yamada K."/>
            <person name="Lim J."/>
            <person name="Dale J.M."/>
            <person name="Chen H."/>
            <person name="Shinn P."/>
            <person name="Palm C.J."/>
            <person name="Southwick A.M."/>
            <person name="Wu H.C."/>
            <person name="Kim C.J."/>
            <person name="Nguyen M."/>
            <person name="Pham P.K."/>
            <person name="Cheuk R.F."/>
            <person name="Karlin-Newmann G."/>
            <person name="Liu S.X."/>
            <person name="Lam B."/>
            <person name="Sakano H."/>
            <person name="Wu T."/>
            <person name="Yu G."/>
            <person name="Miranda M."/>
            <person name="Quach H.L."/>
            <person name="Tripp M."/>
            <person name="Chang C.H."/>
            <person name="Lee J.M."/>
            <person name="Toriumi M.J."/>
            <person name="Chan M.M."/>
            <person name="Tang C.C."/>
            <person name="Onodera C.S."/>
            <person name="Deng J.M."/>
            <person name="Akiyama K."/>
            <person name="Ansari Y."/>
            <person name="Arakawa T."/>
            <person name="Banh J."/>
            <person name="Banno F."/>
            <person name="Bowser L."/>
            <person name="Brooks S.Y."/>
            <person name="Carninci P."/>
            <person name="Chao Q."/>
            <person name="Choy N."/>
            <person name="Enju A."/>
            <person name="Goldsmith A.D."/>
            <person name="Gurjal M."/>
            <person name="Hansen N.F."/>
            <person name="Hayashizaki Y."/>
            <person name="Johnson-Hopson C."/>
            <person name="Hsuan V.W."/>
            <person name="Iida K."/>
            <person name="Karnes M."/>
            <person name="Khan S."/>
            <person name="Koesema E."/>
            <person name="Ishida J."/>
            <person name="Jiang P.X."/>
            <person name="Jones T."/>
            <person name="Kawai J."/>
            <person name="Kamiya A."/>
            <person name="Meyers C."/>
            <person name="Nakajima M."/>
            <person name="Narusaka M."/>
            <person name="Seki M."/>
            <person name="Sakurai T."/>
            <person name="Satou M."/>
            <person name="Tamse R."/>
            <person name="Vaysberg M."/>
            <person name="Wallender E.K."/>
            <person name="Wong C."/>
            <person name="Yamamura Y."/>
            <person name="Yuan S."/>
            <person name="Shinozaki K."/>
            <person name="Davis R.W."/>
            <person name="Theologis A."/>
            <person name="Ecker J.R."/>
        </authorList>
    </citation>
    <scope>NUCLEOTIDE SEQUENCE [LARGE SCALE MRNA] (ISOFORMS 1 AND 2)</scope>
    <source>
        <strain>cv. Columbia</strain>
    </source>
</reference>
<reference key="4">
    <citation type="journal article" date="2006" name="Plant Physiol.">
        <title>Protein profiling of plastoglobules in chloroplasts and chromoplasts. A surprising site for differential accumulation of metabolic enzymes.</title>
        <authorList>
            <person name="Ytterberg A.J."/>
            <person name="Peltier J.-B."/>
            <person name="van Wijk K.J."/>
        </authorList>
    </citation>
    <scope>IDENTIFICATION BY MASS SPECTROMETRY</scope>
    <scope>SUBCELLULAR LOCATION [LARGE SCALE ANALYSIS]</scope>
    <source>
        <strain>cv. Columbia</strain>
    </source>
</reference>
<reference key="5">
    <citation type="journal article" date="2012" name="Plant Physiol.">
        <title>The functional network of the Arabidopsis plastoglobule proteome based on quantitative proteomics and genome-wide coexpression analysis.</title>
        <authorList>
            <person name="Lundquist P.K."/>
            <person name="Poliakov A."/>
            <person name="Bhuiyan N.H."/>
            <person name="Zybailov B."/>
            <person name="Sun Q."/>
            <person name="van Wijk K.J."/>
        </authorList>
    </citation>
    <scope>IDENTIFICATION BY MASS SPECTROMETRY</scope>
    <scope>SUBCELLULAR LOCATION [LARGE SCALE ANALYSIS]</scope>
    <source>
        <strain>cv. Columbia</strain>
    </source>
</reference>
<comment type="subcellular location">
    <subcellularLocation>
        <location evidence="3 4">Plastid</location>
        <location evidence="3 4">Chloroplast</location>
        <location evidence="3 4">Plastoglobule</location>
    </subcellularLocation>
</comment>
<comment type="alternative products">
    <event type="alternative splicing"/>
    <isoform>
        <id>Q94BU1-1</id>
        <name>1</name>
        <sequence type="displayed"/>
    </isoform>
    <isoform>
        <id>Q94BU1-2</id>
        <name>2</name>
        <sequence type="described" ref="VSP_025068 VSP_025069 VSP_025070 VSP_025071"/>
    </isoform>
</comment>
<comment type="similarity">
    <text evidence="6">Belongs to the protein kinase superfamily. ADCK protein kinase family.</text>
</comment>
<comment type="sequence caution" evidence="6">
    <conflict type="erroneous gene model prediction">
        <sequence resource="EMBL-CDS" id="AAF43234"/>
    </conflict>
</comment>
<keyword id="KW-0025">Alternative splicing</keyword>
<keyword id="KW-0067">ATP-binding</keyword>
<keyword id="KW-0150">Chloroplast</keyword>
<keyword id="KW-0418">Kinase</keyword>
<keyword id="KW-0547">Nucleotide-binding</keyword>
<keyword id="KW-0934">Plastid</keyword>
<keyword id="KW-1185">Reference proteome</keyword>
<keyword id="KW-0808">Transferase</keyword>
<keyword id="KW-0809">Transit peptide</keyword>